<feature type="chain" id="PRO_0000283612" description="Ammonium transporter Rh type B">
    <location>
        <begin position="1"/>
        <end position="460"/>
    </location>
</feature>
<feature type="topological domain" description="Cytoplasmic" evidence="2">
    <location>
        <begin position="1"/>
        <end position="10"/>
    </location>
</feature>
<feature type="transmembrane region" description="Helical" evidence="2">
    <location>
        <begin position="11"/>
        <end position="31"/>
    </location>
</feature>
<feature type="topological domain" description="Extracellular" evidence="2">
    <location>
        <begin position="32"/>
        <end position="62"/>
    </location>
</feature>
<feature type="transmembrane region" description="Helical" evidence="2">
    <location>
        <begin position="63"/>
        <end position="83"/>
    </location>
</feature>
<feature type="topological domain" description="Cytoplasmic" evidence="2">
    <location>
        <begin position="84"/>
        <end position="87"/>
    </location>
</feature>
<feature type="transmembrane region" description="Helical" evidence="2">
    <location>
        <begin position="88"/>
        <end position="108"/>
    </location>
</feature>
<feature type="topological domain" description="Extracellular" evidence="2">
    <location>
        <begin position="109"/>
        <end position="125"/>
    </location>
</feature>
<feature type="transmembrane region" description="Helical" evidence="2">
    <location>
        <begin position="126"/>
        <end position="146"/>
    </location>
</feature>
<feature type="topological domain" description="Cytoplasmic" evidence="2">
    <location>
        <begin position="147"/>
        <end position="150"/>
    </location>
</feature>
<feature type="transmembrane region" description="Helical" evidence="2">
    <location>
        <begin position="151"/>
        <end position="171"/>
    </location>
</feature>
<feature type="topological domain" description="Extracellular" evidence="2">
    <location>
        <begin position="172"/>
        <end position="179"/>
    </location>
</feature>
<feature type="transmembrane region" description="Helical" evidence="2">
    <location>
        <begin position="180"/>
        <end position="202"/>
    </location>
</feature>
<feature type="topological domain" description="Cytoplasmic" evidence="2">
    <location>
        <begin position="203"/>
        <end position="220"/>
    </location>
</feature>
<feature type="transmembrane region" description="Helical" evidence="2">
    <location>
        <begin position="221"/>
        <end position="241"/>
    </location>
</feature>
<feature type="topological domain" description="Extracellular" evidence="2">
    <location>
        <begin position="242"/>
        <end position="252"/>
    </location>
</feature>
<feature type="transmembrane region" description="Helical" evidence="2">
    <location>
        <begin position="253"/>
        <end position="273"/>
    </location>
</feature>
<feature type="topological domain" description="Cytoplasmic" evidence="2">
    <location>
        <begin position="274"/>
        <end position="283"/>
    </location>
</feature>
<feature type="transmembrane region" description="Helical" evidence="2">
    <location>
        <begin position="284"/>
        <end position="304"/>
    </location>
</feature>
<feature type="topological domain" description="Extracellular" evidence="2">
    <location>
        <position position="305"/>
    </location>
</feature>
<feature type="transmembrane region" description="Helical" evidence="2">
    <location>
        <begin position="306"/>
        <end position="326"/>
    </location>
</feature>
<feature type="topological domain" description="Cytoplasmic" evidence="2">
    <location>
        <begin position="327"/>
        <end position="347"/>
    </location>
</feature>
<feature type="transmembrane region" description="Helical" evidence="2">
    <location>
        <begin position="348"/>
        <end position="368"/>
    </location>
</feature>
<feature type="topological domain" description="Extracellular" evidence="2">
    <location>
        <begin position="369"/>
        <end position="394"/>
    </location>
</feature>
<feature type="transmembrane region" description="Helical" evidence="2">
    <location>
        <begin position="395"/>
        <end position="415"/>
    </location>
</feature>
<feature type="topological domain" description="Cytoplasmic" evidence="2">
    <location>
        <begin position="416"/>
        <end position="460"/>
    </location>
</feature>
<feature type="glycosylation site" description="N-linked (GlcNAc...) asparagine" evidence="2">
    <location>
        <position position="48"/>
    </location>
</feature>
<feature type="sequence conflict" description="In Ref. 1; AAS80044/AAU89493." evidence="3" ref="1">
    <original>D</original>
    <variation>Y</variation>
    <location>
        <position position="117"/>
    </location>
</feature>
<feature type="sequence conflict" description="In Ref. 1; AAS80044/AAU89493." evidence="3" ref="1">
    <original>I</original>
    <variation>F</variation>
    <location>
        <position position="120"/>
    </location>
</feature>
<dbReference type="EMBL" id="AY455819">
    <property type="protein sequence ID" value="AAS80044.1"/>
    <property type="status" value="ALT_FRAME"/>
    <property type="molecule type" value="mRNA"/>
</dbReference>
<dbReference type="EMBL" id="AY619985">
    <property type="protein sequence ID" value="AAU89493.1"/>
    <property type="status" value="ALT_FRAME"/>
    <property type="molecule type" value="mRNA"/>
</dbReference>
<dbReference type="EMBL" id="BC121561">
    <property type="protein sequence ID" value="AAI21562.1"/>
    <property type="molecule type" value="mRNA"/>
</dbReference>
<dbReference type="RefSeq" id="NP_001011175.1">
    <property type="nucleotide sequence ID" value="NM_001011175.1"/>
</dbReference>
<dbReference type="RefSeq" id="XP_012823751.1">
    <property type="nucleotide sequence ID" value="XM_012968297.1"/>
</dbReference>
<dbReference type="SMR" id="Q0IIV2"/>
<dbReference type="FunCoup" id="Q0IIV2">
    <property type="interactions" value="49"/>
</dbReference>
<dbReference type="STRING" id="8364.ENSXETP00000014440"/>
<dbReference type="GlyCosmos" id="Q0IIV2">
    <property type="glycosylation" value="1 site, No reported glycans"/>
</dbReference>
<dbReference type="PaxDb" id="8364-ENSXETP00000043046"/>
<dbReference type="DNASU" id="496595"/>
<dbReference type="GeneID" id="496595"/>
<dbReference type="KEGG" id="xtr:496595"/>
<dbReference type="AGR" id="Xenbase:XB-GENE-1009286"/>
<dbReference type="CTD" id="57127"/>
<dbReference type="Xenbase" id="XB-GENE-1009286">
    <property type="gene designation" value="rhbg"/>
</dbReference>
<dbReference type="eggNOG" id="KOG3796">
    <property type="taxonomic scope" value="Eukaryota"/>
</dbReference>
<dbReference type="HOGENOM" id="CLU_021386_0_0_1"/>
<dbReference type="InParanoid" id="Q0IIV2"/>
<dbReference type="OrthoDB" id="534912at2759"/>
<dbReference type="Reactome" id="R-XTR-444411">
    <property type="pathway name" value="Rhesus glycoproteins mediate ammonium transport"/>
</dbReference>
<dbReference type="Proteomes" id="UP000008143">
    <property type="component" value="Chromosome 8"/>
</dbReference>
<dbReference type="GO" id="GO:0016323">
    <property type="term" value="C:basolateral plasma membrane"/>
    <property type="evidence" value="ECO:0007669"/>
    <property type="project" value="UniProtKB-SubCell"/>
</dbReference>
<dbReference type="GO" id="GO:0030659">
    <property type="term" value="C:cytoplasmic vesicle membrane"/>
    <property type="evidence" value="ECO:0007669"/>
    <property type="project" value="UniProtKB-SubCell"/>
</dbReference>
<dbReference type="GO" id="GO:0008519">
    <property type="term" value="F:ammonium channel activity"/>
    <property type="evidence" value="ECO:0007669"/>
    <property type="project" value="InterPro"/>
</dbReference>
<dbReference type="FunFam" id="1.10.3430.10:FF:000001">
    <property type="entry name" value="Ammonium transporter Rh type C"/>
    <property type="match status" value="1"/>
</dbReference>
<dbReference type="Gene3D" id="1.10.3430.10">
    <property type="entry name" value="Ammonium transporter AmtB like domains"/>
    <property type="match status" value="1"/>
</dbReference>
<dbReference type="InterPro" id="IPR029020">
    <property type="entry name" value="Ammonium/urea_transptr"/>
</dbReference>
<dbReference type="InterPro" id="IPR024041">
    <property type="entry name" value="NH4_transpt_AmtB-like_dom"/>
</dbReference>
<dbReference type="InterPro" id="IPR002229">
    <property type="entry name" value="RhesusRHD"/>
</dbReference>
<dbReference type="PANTHER" id="PTHR11730">
    <property type="entry name" value="AMMONIUM TRANSPORTER"/>
    <property type="match status" value="1"/>
</dbReference>
<dbReference type="PANTHER" id="PTHR11730:SF42">
    <property type="entry name" value="AMMONIUM TRANSPORTER RH TYPE B"/>
    <property type="match status" value="1"/>
</dbReference>
<dbReference type="Pfam" id="PF00909">
    <property type="entry name" value="Ammonium_transp"/>
    <property type="match status" value="1"/>
</dbReference>
<dbReference type="PRINTS" id="PR00342">
    <property type="entry name" value="RHESUSRHD"/>
</dbReference>
<dbReference type="SUPFAM" id="SSF111352">
    <property type="entry name" value="Ammonium transporter"/>
    <property type="match status" value="1"/>
</dbReference>
<gene>
    <name type="primary">rhbg</name>
</gene>
<organism>
    <name type="scientific">Xenopus tropicalis</name>
    <name type="common">Western clawed frog</name>
    <name type="synonym">Silurana tropicalis</name>
    <dbReference type="NCBI Taxonomy" id="8364"/>
    <lineage>
        <taxon>Eukaryota</taxon>
        <taxon>Metazoa</taxon>
        <taxon>Chordata</taxon>
        <taxon>Craniata</taxon>
        <taxon>Vertebrata</taxon>
        <taxon>Euteleostomi</taxon>
        <taxon>Amphibia</taxon>
        <taxon>Batrachia</taxon>
        <taxon>Anura</taxon>
        <taxon>Pipoidea</taxon>
        <taxon>Pipidae</taxon>
        <taxon>Xenopodinae</taxon>
        <taxon>Xenopus</taxon>
        <taxon>Silurana</taxon>
    </lineage>
</organism>
<reference key="1">
    <citation type="journal article" date="2005" name="Proc. Natl. Acad. Sci. U.S.A.">
        <title>Evolutionary conservation and diversification of Rh family genes and proteins.</title>
        <authorList>
            <person name="Huang C.-H."/>
            <person name="Peng J."/>
        </authorList>
    </citation>
    <scope>NUCLEOTIDE SEQUENCE [MRNA]</scope>
</reference>
<reference key="2">
    <citation type="submission" date="2006-08" db="EMBL/GenBank/DDBJ databases">
        <authorList>
            <consortium name="NIH - Xenopus Gene Collection (XGC) project"/>
        </authorList>
    </citation>
    <scope>NUCLEOTIDE SEQUENCE [LARGE SCALE MRNA]</scope>
    <source>
        <strain>N6</strain>
        <tissue>Spleen</tissue>
    </source>
</reference>
<accession>Q0IIV2</accession>
<accession>Q5VHU6</accession>
<comment type="function">
    <text evidence="1">Functions as a specific ammonium transporter.</text>
</comment>
<comment type="subcellular location">
    <subcellularLocation>
        <location evidence="1">Basolateral cell membrane</location>
        <topology evidence="1">Multi-pass membrane protein</topology>
    </subcellularLocation>
    <subcellularLocation>
        <location evidence="1">Cytoplasmic vesicle membrane</location>
        <topology evidence="1">Multi-pass membrane protein</topology>
    </subcellularLocation>
</comment>
<comment type="similarity">
    <text evidence="3">Belongs to the ammonium transporter (TC 2.A.49) family. Rh subfamily.</text>
</comment>
<comment type="sequence caution" evidence="3">
    <conflict type="frameshift">
        <sequence resource="EMBL-CDS" id="AAS80044"/>
    </conflict>
</comment>
<comment type="sequence caution" evidence="3">
    <conflict type="frameshift">
        <sequence resource="EMBL-CDS" id="AAU89493"/>
    </conflict>
</comment>
<keyword id="KW-0924">Ammonia transport</keyword>
<keyword id="KW-1003">Cell membrane</keyword>
<keyword id="KW-0968">Cytoplasmic vesicle</keyword>
<keyword id="KW-0325">Glycoprotein</keyword>
<keyword id="KW-0472">Membrane</keyword>
<keyword id="KW-1185">Reference proteome</keyword>
<keyword id="KW-0812">Transmembrane</keyword>
<keyword id="KW-1133">Transmembrane helix</keyword>
<keyword id="KW-0813">Transport</keyword>
<evidence type="ECO:0000250" key="1"/>
<evidence type="ECO:0000255" key="2"/>
<evidence type="ECO:0000305" key="3"/>
<name>RHBG_XENTR</name>
<protein>
    <recommendedName>
        <fullName>Ammonium transporter Rh type B</fullName>
    </recommendedName>
    <alternativeName>
        <fullName>Rhesus blood group family type B glycoprotein</fullName>
        <shortName>Rh family type B glycoprotein</shortName>
        <shortName>Rh type B glycoprotein</shortName>
    </alternativeName>
</protein>
<proteinExistence type="evidence at transcript level"/>
<sequence>MTGYSTNMRIKLPVFCLLLEFITIILFAVFVRYDHESDAKQWHDEMRNHSVQNAENDFYFRYPSFQDVHVMIFIGFGFLMTFLKRYGFSSVAFNFLIAAFGLQWSTLIQGFFHGFHDGKIHVGIESMINADFCTGAVLISFGAVLGKTSPVQLIVMTLIEVTLFGINEYIILNIVGAKDAGGSMTIHTFGAYFGLIVSRVLYRDDLEKSRQREGSVYHSDLFAMIGTIYLWMFWPSFNSAITAHGDDQHRTVMNTYYSLAACTLATFGFSALLNGEGKLDMVHIQNAALAGGVAVGTSGEMMLTPFGAMIAGTLAGMISVLGYKYLTPVLDSKLKIQDTCGVHNLHGMPGILGALIGAIVALFATAEIYGAGMEDVFPLISDGSRTAKQQSLYQFLALLVALGFAILGGLVVGFILKLPIFGTPSDAECFEDAVYWEVPGGEGHQQLTVVINNEDPDTQA</sequence>